<evidence type="ECO:0000250" key="1"/>
<evidence type="ECO:0000255" key="2">
    <source>
        <dbReference type="PROSITE-ProRule" id="PRU00145"/>
    </source>
</evidence>
<evidence type="ECO:0000255" key="3">
    <source>
        <dbReference type="PROSITE-ProRule" id="PRU00192"/>
    </source>
</evidence>
<evidence type="ECO:0000256" key="4">
    <source>
        <dbReference type="SAM" id="MobiDB-lite"/>
    </source>
</evidence>
<evidence type="ECO:0000305" key="5"/>
<sequence>MNSALPEDVKNLLTELETFLLDVLKAETLSKKGKEKKEILIKRLKDIKHSYPQEFQDKAEDDDQEENDGFPLPPDAVSLASDRDKDEDLPYDGSFYPPVAAQDLEYLKAGYLEKRRKDHSFFASEWQKRWCVFTNSLFYYYGSDKDKQQKGAFSLDGYRAKMNDTLRKDAKKDCCFEIFAPDKRVYQFAASSPKEAEEWINAIMNSRGIIATEDEELYDDVNQEIDASLEEDIYEELPEESEKPVTETETQKATPVPVNNTSGKENTDYANFYRGLWDCTGDHPDELSFKHGDTIYIISKEYNTYGWWVGEMKGTIGLVPKAYIIEMYDI</sequence>
<organism>
    <name type="scientific">Xenopus laevis</name>
    <name type="common">African clawed frog</name>
    <dbReference type="NCBI Taxonomy" id="8355"/>
    <lineage>
        <taxon>Eukaryota</taxon>
        <taxon>Metazoa</taxon>
        <taxon>Chordata</taxon>
        <taxon>Craniata</taxon>
        <taxon>Vertebrata</taxon>
        <taxon>Euteleostomi</taxon>
        <taxon>Amphibia</taxon>
        <taxon>Batrachia</taxon>
        <taxon>Anura</taxon>
        <taxon>Pipoidea</taxon>
        <taxon>Pipidae</taxon>
        <taxon>Xenopodinae</taxon>
        <taxon>Xenopus</taxon>
        <taxon>Xenopus</taxon>
    </lineage>
</organism>
<protein>
    <recommendedName>
        <fullName>Src kinase-associated phosphoprotein 2-B</fullName>
    </recommendedName>
</protein>
<accession>Q5U597</accession>
<gene>
    <name type="primary">skap2-b</name>
</gene>
<dbReference type="EMBL" id="BC084787">
    <property type="protein sequence ID" value="AAH84787.1"/>
    <property type="molecule type" value="mRNA"/>
</dbReference>
<dbReference type="RefSeq" id="NP_001088461.1">
    <property type="nucleotide sequence ID" value="NM_001094992.1"/>
</dbReference>
<dbReference type="SMR" id="Q5U597"/>
<dbReference type="DNASU" id="495326"/>
<dbReference type="GeneID" id="495326"/>
<dbReference type="KEGG" id="xla:495326"/>
<dbReference type="AGR" id="Xenbase:XB-GENE-6253971"/>
<dbReference type="CTD" id="495326"/>
<dbReference type="Xenbase" id="XB-GENE-6253971">
    <property type="gene designation" value="skap2.L"/>
</dbReference>
<dbReference type="OrthoDB" id="243840at2759"/>
<dbReference type="Proteomes" id="UP000186698">
    <property type="component" value="Chromosome 6L"/>
</dbReference>
<dbReference type="Bgee" id="495326">
    <property type="expression patterns" value="Expressed in lung and 18 other cell types or tissues"/>
</dbReference>
<dbReference type="GO" id="GO:0005737">
    <property type="term" value="C:cytoplasm"/>
    <property type="evidence" value="ECO:0000318"/>
    <property type="project" value="GO_Central"/>
</dbReference>
<dbReference type="GO" id="GO:0005886">
    <property type="term" value="C:plasma membrane"/>
    <property type="evidence" value="ECO:0000318"/>
    <property type="project" value="GO_Central"/>
</dbReference>
<dbReference type="GO" id="GO:0042113">
    <property type="term" value="P:B cell activation"/>
    <property type="evidence" value="ECO:0007669"/>
    <property type="project" value="UniProtKB-KW"/>
</dbReference>
<dbReference type="CDD" id="cd12045">
    <property type="entry name" value="SH3_SKAP2"/>
    <property type="match status" value="1"/>
</dbReference>
<dbReference type="FunFam" id="2.30.30.40:FF:000097">
    <property type="entry name" value="Putative src kinase-associated phosphoprotein 2"/>
    <property type="match status" value="1"/>
</dbReference>
<dbReference type="Gene3D" id="6.10.250.220">
    <property type="match status" value="1"/>
</dbReference>
<dbReference type="Gene3D" id="2.30.29.30">
    <property type="entry name" value="Pleckstrin-homology domain (PH domain)/Phosphotyrosine-binding domain (PTB)"/>
    <property type="match status" value="1"/>
</dbReference>
<dbReference type="Gene3D" id="2.30.30.40">
    <property type="entry name" value="SH3 Domains"/>
    <property type="match status" value="1"/>
</dbReference>
<dbReference type="InterPro" id="IPR011993">
    <property type="entry name" value="PH-like_dom_sf"/>
</dbReference>
<dbReference type="InterPro" id="IPR001849">
    <property type="entry name" value="PH_domain"/>
</dbReference>
<dbReference type="InterPro" id="IPR036028">
    <property type="entry name" value="SH3-like_dom_sf"/>
</dbReference>
<dbReference type="InterPro" id="IPR001452">
    <property type="entry name" value="SH3_domain"/>
</dbReference>
<dbReference type="InterPro" id="IPR037781">
    <property type="entry name" value="SKAP_fam"/>
</dbReference>
<dbReference type="PANTHER" id="PTHR15129:SF2">
    <property type="entry name" value="SRC KINASE-ASSOCIATED PHOSPHOPROTEIN 2"/>
    <property type="match status" value="1"/>
</dbReference>
<dbReference type="PANTHER" id="PTHR15129">
    <property type="entry name" value="SRC-ASSOCIATED ADAPTOR PROTEIN"/>
    <property type="match status" value="1"/>
</dbReference>
<dbReference type="Pfam" id="PF00169">
    <property type="entry name" value="PH"/>
    <property type="match status" value="1"/>
</dbReference>
<dbReference type="Pfam" id="PF00018">
    <property type="entry name" value="SH3_1"/>
    <property type="match status" value="1"/>
</dbReference>
<dbReference type="PRINTS" id="PR00452">
    <property type="entry name" value="SH3DOMAIN"/>
</dbReference>
<dbReference type="SMART" id="SM00233">
    <property type="entry name" value="PH"/>
    <property type="match status" value="1"/>
</dbReference>
<dbReference type="SMART" id="SM00326">
    <property type="entry name" value="SH3"/>
    <property type="match status" value="1"/>
</dbReference>
<dbReference type="SUPFAM" id="SSF50729">
    <property type="entry name" value="PH domain-like"/>
    <property type="match status" value="1"/>
</dbReference>
<dbReference type="SUPFAM" id="SSF50044">
    <property type="entry name" value="SH3-domain"/>
    <property type="match status" value="1"/>
</dbReference>
<dbReference type="PROSITE" id="PS50003">
    <property type="entry name" value="PH_DOMAIN"/>
    <property type="match status" value="1"/>
</dbReference>
<dbReference type="PROSITE" id="PS50002">
    <property type="entry name" value="SH3"/>
    <property type="match status" value="1"/>
</dbReference>
<proteinExistence type="evidence at transcript level"/>
<keyword id="KW-0075">B-cell activation</keyword>
<keyword id="KW-0963">Cytoplasm</keyword>
<keyword id="KW-0597">Phosphoprotein</keyword>
<keyword id="KW-1185">Reference proteome</keyword>
<keyword id="KW-0728">SH3 domain</keyword>
<feature type="chain" id="PRO_0000270186" description="Src kinase-associated phosphoprotein 2-B">
    <location>
        <begin position="1"/>
        <end position="330"/>
    </location>
</feature>
<feature type="domain" description="PH" evidence="2">
    <location>
        <begin position="105"/>
        <end position="208"/>
    </location>
</feature>
<feature type="domain" description="SH3" evidence="3">
    <location>
        <begin position="268"/>
        <end position="329"/>
    </location>
</feature>
<feature type="region of interest" description="Disordered" evidence="4">
    <location>
        <begin position="57"/>
        <end position="84"/>
    </location>
</feature>
<feature type="region of interest" description="Disordered" evidence="4">
    <location>
        <begin position="236"/>
        <end position="261"/>
    </location>
</feature>
<feature type="compositionally biased region" description="Acidic residues" evidence="4">
    <location>
        <begin position="59"/>
        <end position="68"/>
    </location>
</feature>
<feature type="compositionally biased region" description="Basic and acidic residues" evidence="4">
    <location>
        <begin position="240"/>
        <end position="250"/>
    </location>
</feature>
<feature type="compositionally biased region" description="Polar residues" evidence="4">
    <location>
        <begin position="251"/>
        <end position="261"/>
    </location>
</feature>
<name>SKA2B_XENLA</name>
<comment type="function">
    <text evidence="1">May be involved in B-cell and macrophage adhesion processes. May play a role in src signaling pathway (By similarity).</text>
</comment>
<comment type="subcellular location">
    <subcellularLocation>
        <location evidence="1">Cytoplasm</location>
    </subcellularLocation>
</comment>
<comment type="PTM">
    <text evidence="1">Phosphorylated on tyrosines.</text>
</comment>
<comment type="similarity">
    <text evidence="5">Belongs to the SKAP family.</text>
</comment>
<reference key="1">
    <citation type="submission" date="2004-10" db="EMBL/GenBank/DDBJ databases">
        <authorList>
            <consortium name="NIH - Xenopus Gene Collection (XGC) project"/>
        </authorList>
    </citation>
    <scope>NUCLEOTIDE SEQUENCE [LARGE SCALE MRNA]</scope>
    <source>
        <tissue>Eye</tissue>
    </source>
</reference>